<evidence type="ECO:0000255" key="1">
    <source>
        <dbReference type="HAMAP-Rule" id="MF_00312"/>
    </source>
</evidence>
<gene>
    <name evidence="1" type="primary">atpF</name>
    <name type="ordered locus">TON_1751</name>
</gene>
<sequence>MKIAVLGDKDTALGFKLAGAHEVYSFEDTPLDMERLKNKLNELVEREDIGIILITERFVQKIGLPDVTFPIILQVPDKSGSKFGEEAIKEIVRRAIGVELKR</sequence>
<accession>B6YV13</accession>
<protein>
    <recommendedName>
        <fullName evidence="1">A-type ATP synthase subunit F</fullName>
    </recommendedName>
</protein>
<organism>
    <name type="scientific">Thermococcus onnurineus (strain NA1)</name>
    <dbReference type="NCBI Taxonomy" id="523850"/>
    <lineage>
        <taxon>Archaea</taxon>
        <taxon>Methanobacteriati</taxon>
        <taxon>Methanobacteriota</taxon>
        <taxon>Thermococci</taxon>
        <taxon>Thermococcales</taxon>
        <taxon>Thermococcaceae</taxon>
        <taxon>Thermococcus</taxon>
    </lineage>
</organism>
<name>AATF_THEON</name>
<reference key="1">
    <citation type="journal article" date="2008" name="J. Bacteriol.">
        <title>The complete genome sequence of Thermococcus onnurineus NA1 reveals a mixed heterotrophic and carboxydotrophic metabolism.</title>
        <authorList>
            <person name="Lee H.S."/>
            <person name="Kang S.G."/>
            <person name="Bae S.S."/>
            <person name="Lim J.K."/>
            <person name="Cho Y."/>
            <person name="Kim Y.J."/>
            <person name="Jeon J.H."/>
            <person name="Cha S.-S."/>
            <person name="Kwon K.K."/>
            <person name="Kim H.-T."/>
            <person name="Park C.-J."/>
            <person name="Lee H.-W."/>
            <person name="Kim S.I."/>
            <person name="Chun J."/>
            <person name="Colwell R.R."/>
            <person name="Kim S.-J."/>
            <person name="Lee J.-H."/>
        </authorList>
    </citation>
    <scope>NUCLEOTIDE SEQUENCE [LARGE SCALE GENOMIC DNA]</scope>
    <source>
        <strain>NA1</strain>
    </source>
</reference>
<comment type="function">
    <text evidence="1">Component of the A-type ATP synthase that produces ATP from ADP in the presence of a proton gradient across the membrane.</text>
</comment>
<comment type="subunit">
    <text evidence="1">Has multiple subunits with at least A(3), B(3), C, D, E, F, H, I and proteolipid K(x).</text>
</comment>
<comment type="subcellular location">
    <subcellularLocation>
        <location evidence="1">Cell membrane</location>
        <topology evidence="1">Peripheral membrane protein</topology>
    </subcellularLocation>
</comment>
<comment type="similarity">
    <text evidence="1">Belongs to the V-ATPase F subunit family.</text>
</comment>
<proteinExistence type="inferred from homology"/>
<feature type="chain" id="PRO_1000115689" description="A-type ATP synthase subunit F">
    <location>
        <begin position="1"/>
        <end position="102"/>
    </location>
</feature>
<dbReference type="EMBL" id="CP000855">
    <property type="protein sequence ID" value="ACJ17241.1"/>
    <property type="molecule type" value="Genomic_DNA"/>
</dbReference>
<dbReference type="RefSeq" id="WP_012572713.1">
    <property type="nucleotide sequence ID" value="NC_011529.1"/>
</dbReference>
<dbReference type="SMR" id="B6YV13"/>
<dbReference type="STRING" id="523850.TON_1751"/>
<dbReference type="GeneID" id="7017420"/>
<dbReference type="KEGG" id="ton:TON_1751"/>
<dbReference type="PATRIC" id="fig|523850.10.peg.1764"/>
<dbReference type="eggNOG" id="arCOG04102">
    <property type="taxonomic scope" value="Archaea"/>
</dbReference>
<dbReference type="HOGENOM" id="CLU_135754_2_1_2"/>
<dbReference type="OrthoDB" id="24971at2157"/>
<dbReference type="Proteomes" id="UP000002727">
    <property type="component" value="Chromosome"/>
</dbReference>
<dbReference type="GO" id="GO:0005886">
    <property type="term" value="C:plasma membrane"/>
    <property type="evidence" value="ECO:0007669"/>
    <property type="project" value="UniProtKB-SubCell"/>
</dbReference>
<dbReference type="GO" id="GO:0005524">
    <property type="term" value="F:ATP binding"/>
    <property type="evidence" value="ECO:0007669"/>
    <property type="project" value="UniProtKB-UniRule"/>
</dbReference>
<dbReference type="GO" id="GO:0046933">
    <property type="term" value="F:proton-transporting ATP synthase activity, rotational mechanism"/>
    <property type="evidence" value="ECO:0007669"/>
    <property type="project" value="UniProtKB-UniRule"/>
</dbReference>
<dbReference type="GO" id="GO:0046961">
    <property type="term" value="F:proton-transporting ATPase activity, rotational mechanism"/>
    <property type="evidence" value="ECO:0007669"/>
    <property type="project" value="InterPro"/>
</dbReference>
<dbReference type="GO" id="GO:0042777">
    <property type="term" value="P:proton motive force-driven plasma membrane ATP synthesis"/>
    <property type="evidence" value="ECO:0007669"/>
    <property type="project" value="UniProtKB-UniRule"/>
</dbReference>
<dbReference type="Gene3D" id="3.40.50.10580">
    <property type="entry name" value="ATPase, V1 complex, subunit F"/>
    <property type="match status" value="1"/>
</dbReference>
<dbReference type="HAMAP" id="MF_00312">
    <property type="entry name" value="ATP_synth_F_arch"/>
    <property type="match status" value="1"/>
</dbReference>
<dbReference type="InterPro" id="IPR008218">
    <property type="entry name" value="ATPase_V1-cplx_f_g_su"/>
</dbReference>
<dbReference type="InterPro" id="IPR022944">
    <property type="entry name" value="ATPase_V1-cplx_fsu_bac/arc"/>
</dbReference>
<dbReference type="InterPro" id="IPR036906">
    <property type="entry name" value="ATPase_V1_fsu_sf"/>
</dbReference>
<dbReference type="NCBIfam" id="NF003047">
    <property type="entry name" value="PRK03957.1"/>
    <property type="match status" value="1"/>
</dbReference>
<dbReference type="Pfam" id="PF01990">
    <property type="entry name" value="ATP-synt_F"/>
    <property type="match status" value="1"/>
</dbReference>
<dbReference type="SUPFAM" id="SSF159468">
    <property type="entry name" value="AtpF-like"/>
    <property type="match status" value="1"/>
</dbReference>
<keyword id="KW-0066">ATP synthesis</keyword>
<keyword id="KW-1003">Cell membrane</keyword>
<keyword id="KW-0375">Hydrogen ion transport</keyword>
<keyword id="KW-0406">Ion transport</keyword>
<keyword id="KW-0472">Membrane</keyword>
<keyword id="KW-0813">Transport</keyword>